<evidence type="ECO:0000250" key="1"/>
<evidence type="ECO:0000255" key="2"/>
<evidence type="ECO:0000305" key="3"/>
<proteinExistence type="inferred from homology"/>
<reference key="1">
    <citation type="journal article" date="1999" name="Nature">
        <title>Sequence and analysis of chromosome 2 of the plant Arabidopsis thaliana.</title>
        <authorList>
            <person name="Lin X."/>
            <person name="Kaul S."/>
            <person name="Rounsley S.D."/>
            <person name="Shea T.P."/>
            <person name="Benito M.-I."/>
            <person name="Town C.D."/>
            <person name="Fujii C.Y."/>
            <person name="Mason T.M."/>
            <person name="Bowman C.L."/>
            <person name="Barnstead M.E."/>
            <person name="Feldblyum T.V."/>
            <person name="Buell C.R."/>
            <person name="Ketchum K.A."/>
            <person name="Lee J.J."/>
            <person name="Ronning C.M."/>
            <person name="Koo H.L."/>
            <person name="Moffat K.S."/>
            <person name="Cronin L.A."/>
            <person name="Shen M."/>
            <person name="Pai G."/>
            <person name="Van Aken S."/>
            <person name="Umayam L."/>
            <person name="Tallon L.J."/>
            <person name="Gill J.E."/>
            <person name="Adams M.D."/>
            <person name="Carrera A.J."/>
            <person name="Creasy T.H."/>
            <person name="Goodman H.M."/>
            <person name="Somerville C.R."/>
            <person name="Copenhaver G.P."/>
            <person name="Preuss D."/>
            <person name="Nierman W.C."/>
            <person name="White O."/>
            <person name="Eisen J.A."/>
            <person name="Salzberg S.L."/>
            <person name="Fraser C.M."/>
            <person name="Venter J.C."/>
        </authorList>
    </citation>
    <scope>NUCLEOTIDE SEQUENCE [LARGE SCALE GENOMIC DNA]</scope>
    <source>
        <strain>cv. Columbia</strain>
    </source>
</reference>
<reference key="2">
    <citation type="journal article" date="2017" name="Plant J.">
        <title>Araport11: a complete reannotation of the Arabidopsis thaliana reference genome.</title>
        <authorList>
            <person name="Cheng C.Y."/>
            <person name="Krishnakumar V."/>
            <person name="Chan A.P."/>
            <person name="Thibaud-Nissen F."/>
            <person name="Schobel S."/>
            <person name="Town C.D."/>
        </authorList>
    </citation>
    <scope>GENOME REANNOTATION</scope>
    <source>
        <strain>cv. Columbia</strain>
    </source>
</reference>
<reference key="3">
    <citation type="journal article" date="2005" name="Plant Physiol.">
        <title>Genome organization of more than 300 defensin-like genes in Arabidopsis.</title>
        <authorList>
            <person name="Silverstein K.A.T."/>
            <person name="Graham M.A."/>
            <person name="Paape T.D."/>
            <person name="VandenBosch K.A."/>
        </authorList>
    </citation>
    <scope>GENE FAMILY</scope>
</reference>
<gene>
    <name type="ordered locus">At2g22805</name>
    <name type="ORF">T20K9</name>
    <name type="ORF">T30L20</name>
</gene>
<name>DF189_ARATH</name>
<protein>
    <recommendedName>
        <fullName>Putative defensin-like protein 189</fullName>
    </recommendedName>
</protein>
<accession>Q2V468</accession>
<comment type="subcellular location">
    <subcellularLocation>
        <location evidence="1">Secreted</location>
    </subcellularLocation>
</comment>
<comment type="similarity">
    <text evidence="3">Belongs to the DEFL family.</text>
</comment>
<dbReference type="EMBL" id="AC004786">
    <property type="status" value="NOT_ANNOTATED_CDS"/>
    <property type="molecule type" value="Genomic_DNA"/>
</dbReference>
<dbReference type="EMBL" id="AC005617">
    <property type="status" value="NOT_ANNOTATED_CDS"/>
    <property type="molecule type" value="Genomic_DNA"/>
</dbReference>
<dbReference type="EMBL" id="CP002685">
    <property type="protein sequence ID" value="AEC07358.1"/>
    <property type="molecule type" value="Genomic_DNA"/>
</dbReference>
<dbReference type="RefSeq" id="NP_001031398.1">
    <property type="nucleotide sequence ID" value="NM_001036321.2"/>
</dbReference>
<dbReference type="SMR" id="Q2V468"/>
<dbReference type="PaxDb" id="3702-AT2G22805.1"/>
<dbReference type="ProteomicsDB" id="224274"/>
<dbReference type="EnsemblPlants" id="AT2G22805.1">
    <property type="protein sequence ID" value="AT2G22805.1"/>
    <property type="gene ID" value="AT2G22805"/>
</dbReference>
<dbReference type="GeneID" id="3768519"/>
<dbReference type="Gramene" id="AT2G22805.1">
    <property type="protein sequence ID" value="AT2G22805.1"/>
    <property type="gene ID" value="AT2G22805"/>
</dbReference>
<dbReference type="KEGG" id="ath:AT2G22805"/>
<dbReference type="Araport" id="AT2G22805"/>
<dbReference type="TAIR" id="AT2G22805"/>
<dbReference type="HOGENOM" id="CLU_191725_0_0_1"/>
<dbReference type="InParanoid" id="Q2V468"/>
<dbReference type="PhylomeDB" id="Q2V468"/>
<dbReference type="PRO" id="PR:Q2V468"/>
<dbReference type="Proteomes" id="UP000006548">
    <property type="component" value="Chromosome 2"/>
</dbReference>
<dbReference type="ExpressionAtlas" id="Q2V468">
    <property type="expression patterns" value="baseline and differential"/>
</dbReference>
<dbReference type="GO" id="GO:0005576">
    <property type="term" value="C:extracellular region"/>
    <property type="evidence" value="ECO:0007669"/>
    <property type="project" value="UniProtKB-SubCell"/>
</dbReference>
<dbReference type="GO" id="GO:0050832">
    <property type="term" value="P:defense response to fungus"/>
    <property type="evidence" value="ECO:0007669"/>
    <property type="project" value="UniProtKB-KW"/>
</dbReference>
<dbReference type="GO" id="GO:0031640">
    <property type="term" value="P:killing of cells of another organism"/>
    <property type="evidence" value="ECO:0007669"/>
    <property type="project" value="UniProtKB-KW"/>
</dbReference>
<organism>
    <name type="scientific">Arabidopsis thaliana</name>
    <name type="common">Mouse-ear cress</name>
    <dbReference type="NCBI Taxonomy" id="3702"/>
    <lineage>
        <taxon>Eukaryota</taxon>
        <taxon>Viridiplantae</taxon>
        <taxon>Streptophyta</taxon>
        <taxon>Embryophyta</taxon>
        <taxon>Tracheophyta</taxon>
        <taxon>Spermatophyta</taxon>
        <taxon>Magnoliopsida</taxon>
        <taxon>eudicotyledons</taxon>
        <taxon>Gunneridae</taxon>
        <taxon>Pentapetalae</taxon>
        <taxon>rosids</taxon>
        <taxon>malvids</taxon>
        <taxon>Brassicales</taxon>
        <taxon>Brassicaceae</taxon>
        <taxon>Camelineae</taxon>
        <taxon>Arabidopsis</taxon>
    </lineage>
</organism>
<feature type="signal peptide" evidence="2">
    <location>
        <begin position="1"/>
        <end position="28"/>
    </location>
</feature>
<feature type="chain" id="PRO_0000379687" description="Putative defensin-like protein 189">
    <location>
        <begin position="29"/>
        <end position="86"/>
    </location>
</feature>
<feature type="disulfide bond" evidence="1">
    <location>
        <begin position="39"/>
        <end position="85"/>
    </location>
</feature>
<feature type="disulfide bond" evidence="1">
    <location>
        <begin position="52"/>
        <end position="71"/>
    </location>
</feature>
<feature type="disulfide bond" evidence="1">
    <location>
        <begin position="57"/>
        <end position="80"/>
    </location>
</feature>
<feature type="disulfide bond" evidence="1">
    <location>
        <begin position="61"/>
        <end position="82"/>
    </location>
</feature>
<sequence>MKMAKSANEIGFITCLVVFLVLTGQSNGMSNGMPRTVPCIEGRILWNRTLPCSSILCGDHCVPHGYRAGTCDIVNDRAICKCSRCR</sequence>
<keyword id="KW-0929">Antimicrobial</keyword>
<keyword id="KW-1015">Disulfide bond</keyword>
<keyword id="KW-0295">Fungicide</keyword>
<keyword id="KW-0611">Plant defense</keyword>
<keyword id="KW-1185">Reference proteome</keyword>
<keyword id="KW-0964">Secreted</keyword>
<keyword id="KW-0732">Signal</keyword>